<keyword id="KW-0929">Antimicrobial</keyword>
<keyword id="KW-0106">Calcium</keyword>
<keyword id="KW-0963">Cytoplasm</keyword>
<keyword id="KW-1015">Disulfide bond</keyword>
<keyword id="KW-0349">Heme</keyword>
<keyword id="KW-0408">Iron</keyword>
<keyword id="KW-0479">Metal-binding</keyword>
<keyword id="KW-0944">Nitration</keyword>
<keyword id="KW-0560">Oxidoreductase</keyword>
<keyword id="KW-0575">Peroxidase</keyword>
<keyword id="KW-0597">Phosphoprotein</keyword>
<keyword id="KW-1185">Reference proteome</keyword>
<keyword id="KW-0964">Secreted</keyword>
<keyword id="KW-0732">Signal</keyword>
<feature type="signal peptide" evidence="5">
    <location>
        <begin position="1"/>
        <end position="23"/>
    </location>
</feature>
<feature type="propeptide" id="PRO_0000456225" evidence="3">
    <location>
        <begin position="24"/>
        <end position="80"/>
    </location>
</feature>
<feature type="chain" id="PRO_0000456226" description="Lactoperoxidase" evidence="3">
    <location>
        <begin position="81"/>
        <end position="710"/>
    </location>
</feature>
<feature type="active site" description="Proton acceptor" evidence="6">
    <location>
        <position position="224"/>
    </location>
</feature>
<feature type="binding site" description="covalent" evidence="6">
    <location>
        <position position="223"/>
    </location>
    <ligand>
        <name>heme b</name>
        <dbReference type="ChEBI" id="CHEBI:60344"/>
    </ligand>
</feature>
<feature type="binding site" evidence="6">
    <location>
        <position position="225"/>
    </location>
    <ligand>
        <name>Ca(2+)</name>
        <dbReference type="ChEBI" id="CHEBI:29108"/>
    </ligand>
</feature>
<feature type="binding site" evidence="6">
    <location>
        <position position="299"/>
    </location>
    <ligand>
        <name>Ca(2+)</name>
        <dbReference type="ChEBI" id="CHEBI:29108"/>
    </ligand>
</feature>
<feature type="binding site" evidence="6">
    <location>
        <position position="301"/>
    </location>
    <ligand>
        <name>Ca(2+)</name>
        <dbReference type="ChEBI" id="CHEBI:29108"/>
    </ligand>
</feature>
<feature type="binding site" evidence="6">
    <location>
        <position position="303"/>
    </location>
    <ligand>
        <name>Ca(2+)</name>
        <dbReference type="ChEBI" id="CHEBI:29108"/>
    </ligand>
</feature>
<feature type="binding site" evidence="6">
    <location>
        <position position="305"/>
    </location>
    <ligand>
        <name>Ca(2+)</name>
        <dbReference type="ChEBI" id="CHEBI:29108"/>
    </ligand>
</feature>
<feature type="binding site" description="covalent" evidence="6">
    <location>
        <position position="373"/>
    </location>
    <ligand>
        <name>heme b</name>
        <dbReference type="ChEBI" id="CHEBI:60344"/>
    </ligand>
</feature>
<feature type="binding site" description="axial binding residue" evidence="6">
    <location>
        <position position="466"/>
    </location>
    <ligand>
        <name>heme b</name>
        <dbReference type="ChEBI" id="CHEBI:60344"/>
    </ligand>
    <ligandPart>
        <name>Fe</name>
        <dbReference type="ChEBI" id="CHEBI:18248"/>
    </ligandPart>
</feature>
<feature type="site" description="Transition state stabilizer" evidence="6">
    <location>
        <position position="370"/>
    </location>
</feature>
<feature type="modified residue" description="Phosphoserine" evidence="1">
    <location>
        <position position="313"/>
    </location>
</feature>
<feature type="modified residue" description="3'-nitrotyrosine" evidence="2">
    <location>
        <position position="480"/>
    </location>
</feature>
<feature type="disulfide bond" evidence="6">
    <location>
        <begin position="130"/>
        <end position="143"/>
    </location>
</feature>
<feature type="disulfide bond" evidence="6">
    <location>
        <begin position="244"/>
        <end position="254"/>
    </location>
</feature>
<feature type="disulfide bond" evidence="6">
    <location>
        <begin position="248"/>
        <end position="272"/>
    </location>
</feature>
<feature type="disulfide bond" evidence="6">
    <location>
        <begin position="352"/>
        <end position="363"/>
    </location>
</feature>
<feature type="disulfide bond" evidence="6">
    <location>
        <begin position="571"/>
        <end position="628"/>
    </location>
</feature>
<feature type="disulfide bond" evidence="6">
    <location>
        <begin position="669"/>
        <end position="694"/>
    </location>
</feature>
<gene>
    <name evidence="11" type="primary">Lpo</name>
</gene>
<organism>
    <name type="scientific">Mus musculus</name>
    <name type="common">Mouse</name>
    <dbReference type="NCBI Taxonomy" id="10090"/>
    <lineage>
        <taxon>Eukaryota</taxon>
        <taxon>Metazoa</taxon>
        <taxon>Chordata</taxon>
        <taxon>Craniata</taxon>
        <taxon>Vertebrata</taxon>
        <taxon>Euteleostomi</taxon>
        <taxon>Mammalia</taxon>
        <taxon>Eutheria</taxon>
        <taxon>Euarchontoglires</taxon>
        <taxon>Glires</taxon>
        <taxon>Rodentia</taxon>
        <taxon>Myomorpha</taxon>
        <taxon>Muroidea</taxon>
        <taxon>Muridae</taxon>
        <taxon>Murinae</taxon>
        <taxon>Mus</taxon>
        <taxon>Mus</taxon>
    </lineage>
</organism>
<name>PERL_MOUSE</name>
<dbReference type="EC" id="1.11.1.7" evidence="10"/>
<dbReference type="CCDS" id="CCDS25218.1"/>
<dbReference type="RefSeq" id="NP_536345.2">
    <property type="nucleotide sequence ID" value="NM_080420.3"/>
</dbReference>
<dbReference type="RefSeq" id="XP_011247600.1">
    <property type="nucleotide sequence ID" value="XM_011249298.4"/>
</dbReference>
<dbReference type="SMR" id="Q5SW46"/>
<dbReference type="FunCoup" id="Q5SW46">
    <property type="interactions" value="7"/>
</dbReference>
<dbReference type="STRING" id="10090.ENSMUSP00000099466"/>
<dbReference type="PeroxiBase" id="3343">
    <property type="entry name" value="MmLPO"/>
</dbReference>
<dbReference type="GlyGen" id="Q5SW46">
    <property type="glycosylation" value="5 sites, 3 N-linked glycans (3 sites)"/>
</dbReference>
<dbReference type="iPTMnet" id="Q5SW46"/>
<dbReference type="PhosphoSitePlus" id="Q5SW46"/>
<dbReference type="PaxDb" id="10090-ENSMUSP00000099466"/>
<dbReference type="ProteomicsDB" id="359909"/>
<dbReference type="Antibodypedia" id="18358">
    <property type="antibodies" value="269 antibodies from 31 providers"/>
</dbReference>
<dbReference type="DNASU" id="76113"/>
<dbReference type="Ensembl" id="ENSMUST00000103177.10">
    <property type="protein sequence ID" value="ENSMUSP00000099466.4"/>
    <property type="gene ID" value="ENSMUSG00000009356.13"/>
</dbReference>
<dbReference type="GeneID" id="76113"/>
<dbReference type="KEGG" id="mmu:76113"/>
<dbReference type="UCSC" id="uc007kus.2">
    <property type="organism name" value="mouse"/>
</dbReference>
<dbReference type="AGR" id="MGI:1923363"/>
<dbReference type="CTD" id="4025"/>
<dbReference type="MGI" id="MGI:1923363">
    <property type="gene designation" value="Lpo"/>
</dbReference>
<dbReference type="VEuPathDB" id="HostDB:ENSMUSG00000009356"/>
<dbReference type="eggNOG" id="KOG2408">
    <property type="taxonomic scope" value="Eukaryota"/>
</dbReference>
<dbReference type="GeneTree" id="ENSGT00940000160488"/>
<dbReference type="HOGENOM" id="CLU_006087_1_1_1"/>
<dbReference type="InParanoid" id="Q5SW46"/>
<dbReference type="OMA" id="QNKMMTR"/>
<dbReference type="OrthoDB" id="823504at2759"/>
<dbReference type="PhylomeDB" id="Q5SW46"/>
<dbReference type="TreeFam" id="TF314316"/>
<dbReference type="Reactome" id="R-MMU-8941413">
    <property type="pathway name" value="Events associated with phagocytolytic activity of PMN cells"/>
</dbReference>
<dbReference type="BioGRID-ORCS" id="76113">
    <property type="hits" value="0 hits in 79 CRISPR screens"/>
</dbReference>
<dbReference type="ChiTaRS" id="Lpo">
    <property type="organism name" value="mouse"/>
</dbReference>
<dbReference type="PRO" id="PR:Q5SW46"/>
<dbReference type="Proteomes" id="UP000000589">
    <property type="component" value="Chromosome 11"/>
</dbReference>
<dbReference type="RNAct" id="Q5SW46">
    <property type="molecule type" value="protein"/>
</dbReference>
<dbReference type="Bgee" id="ENSMUSG00000009356">
    <property type="expression patterns" value="Expressed in parotid gland and 52 other cell types or tissues"/>
</dbReference>
<dbReference type="ExpressionAtlas" id="Q5SW46">
    <property type="expression patterns" value="baseline and differential"/>
</dbReference>
<dbReference type="GO" id="GO:0016323">
    <property type="term" value="C:basolateral plasma membrane"/>
    <property type="evidence" value="ECO:0007669"/>
    <property type="project" value="Ensembl"/>
</dbReference>
<dbReference type="GO" id="GO:0005737">
    <property type="term" value="C:cytoplasm"/>
    <property type="evidence" value="ECO:0000314"/>
    <property type="project" value="MGI"/>
</dbReference>
<dbReference type="GO" id="GO:0005615">
    <property type="term" value="C:extracellular space"/>
    <property type="evidence" value="ECO:0007669"/>
    <property type="project" value="Ensembl"/>
</dbReference>
<dbReference type="GO" id="GO:0020037">
    <property type="term" value="F:heme binding"/>
    <property type="evidence" value="ECO:0007669"/>
    <property type="project" value="InterPro"/>
</dbReference>
<dbReference type="GO" id="GO:0140825">
    <property type="term" value="F:lactoperoxidase activity"/>
    <property type="evidence" value="ECO:0007669"/>
    <property type="project" value="UniProtKB-EC"/>
</dbReference>
<dbReference type="GO" id="GO:0046872">
    <property type="term" value="F:metal ion binding"/>
    <property type="evidence" value="ECO:0007669"/>
    <property type="project" value="UniProtKB-KW"/>
</dbReference>
<dbReference type="GO" id="GO:0004601">
    <property type="term" value="F:peroxidase activity"/>
    <property type="evidence" value="ECO:0000314"/>
    <property type="project" value="MGI"/>
</dbReference>
<dbReference type="GO" id="GO:0036393">
    <property type="term" value="F:thiocyanate peroxidase activity"/>
    <property type="evidence" value="ECO:0000250"/>
    <property type="project" value="UniProtKB"/>
</dbReference>
<dbReference type="GO" id="GO:0042742">
    <property type="term" value="P:defense response to bacterium"/>
    <property type="evidence" value="ECO:0007669"/>
    <property type="project" value="Ensembl"/>
</dbReference>
<dbReference type="GO" id="GO:0001580">
    <property type="term" value="P:detection of chemical stimulus involved in sensory perception of bitter taste"/>
    <property type="evidence" value="ECO:0007669"/>
    <property type="project" value="Ensembl"/>
</dbReference>
<dbReference type="GO" id="GO:0006979">
    <property type="term" value="P:response to oxidative stress"/>
    <property type="evidence" value="ECO:0007669"/>
    <property type="project" value="InterPro"/>
</dbReference>
<dbReference type="CDD" id="cd09824">
    <property type="entry name" value="myeloperoxidase_like"/>
    <property type="match status" value="1"/>
</dbReference>
<dbReference type="FunFam" id="1.10.640.10:FF:000001">
    <property type="entry name" value="Peroxidasin homolog"/>
    <property type="match status" value="1"/>
</dbReference>
<dbReference type="Gene3D" id="1.10.640.10">
    <property type="entry name" value="Haem peroxidase domain superfamily, animal type"/>
    <property type="match status" value="1"/>
</dbReference>
<dbReference type="InterPro" id="IPR019791">
    <property type="entry name" value="Haem_peroxidase_animal"/>
</dbReference>
<dbReference type="InterPro" id="IPR010255">
    <property type="entry name" value="Haem_peroxidase_sf"/>
</dbReference>
<dbReference type="InterPro" id="IPR037120">
    <property type="entry name" value="Haem_peroxidase_sf_animal"/>
</dbReference>
<dbReference type="PANTHER" id="PTHR11475:SF67">
    <property type="entry name" value="LACTOPEROXIDASE"/>
    <property type="match status" value="1"/>
</dbReference>
<dbReference type="PANTHER" id="PTHR11475">
    <property type="entry name" value="OXIDASE/PEROXIDASE"/>
    <property type="match status" value="1"/>
</dbReference>
<dbReference type="Pfam" id="PF03098">
    <property type="entry name" value="An_peroxidase"/>
    <property type="match status" value="1"/>
</dbReference>
<dbReference type="PRINTS" id="PR00457">
    <property type="entry name" value="ANPEROXIDASE"/>
</dbReference>
<dbReference type="SUPFAM" id="SSF48113">
    <property type="entry name" value="Heme-dependent peroxidases"/>
    <property type="match status" value="1"/>
</dbReference>
<dbReference type="PROSITE" id="PS50292">
    <property type="entry name" value="PEROXIDASE_3"/>
    <property type="match status" value="1"/>
</dbReference>
<evidence type="ECO:0000250" key="1">
    <source>
        <dbReference type="UniProtKB" id="A5JUY8"/>
    </source>
</evidence>
<evidence type="ECO:0000250" key="2">
    <source>
        <dbReference type="UniProtKB" id="P11678"/>
    </source>
</evidence>
<evidence type="ECO:0000250" key="3">
    <source>
        <dbReference type="UniProtKB" id="P22079"/>
    </source>
</evidence>
<evidence type="ECO:0000250" key="4">
    <source>
        <dbReference type="UniProtKB" id="P80025"/>
    </source>
</evidence>
<evidence type="ECO:0000255" key="5"/>
<evidence type="ECO:0000255" key="6">
    <source>
        <dbReference type="PROSITE-ProRule" id="PRU00298"/>
    </source>
</evidence>
<evidence type="ECO:0000269" key="7">
    <source>
    </source>
</evidence>
<evidence type="ECO:0000269" key="8">
    <source>
    </source>
</evidence>
<evidence type="ECO:0000303" key="9">
    <source>
    </source>
</evidence>
<evidence type="ECO:0000305" key="10">
    <source>
    </source>
</evidence>
<evidence type="ECO:0000312" key="11">
    <source>
        <dbReference type="MGI" id="MGI:1923363"/>
    </source>
</evidence>
<reference key="1">
    <citation type="journal article" date="2009" name="PLoS Biol.">
        <title>Lineage-specific biology revealed by a finished genome assembly of the mouse.</title>
        <authorList>
            <person name="Church D.M."/>
            <person name="Goodstadt L."/>
            <person name="Hillier L.W."/>
            <person name="Zody M.C."/>
            <person name="Goldstein S."/>
            <person name="She X."/>
            <person name="Bult C.J."/>
            <person name="Agarwala R."/>
            <person name="Cherry J.L."/>
            <person name="DiCuccio M."/>
            <person name="Hlavina W."/>
            <person name="Kapustin Y."/>
            <person name="Meric P."/>
            <person name="Maglott D."/>
            <person name="Birtle Z."/>
            <person name="Marques A.C."/>
            <person name="Graves T."/>
            <person name="Zhou S."/>
            <person name="Teague B."/>
            <person name="Potamousis K."/>
            <person name="Churas C."/>
            <person name="Place M."/>
            <person name="Herschleb J."/>
            <person name="Runnheim R."/>
            <person name="Forrest D."/>
            <person name="Amos-Landgraf J."/>
            <person name="Schwartz D.C."/>
            <person name="Cheng Z."/>
            <person name="Lindblad-Toh K."/>
            <person name="Eichler E.E."/>
            <person name="Ponting C.P."/>
        </authorList>
    </citation>
    <scope>NUCLEOTIDE SEQUENCE [LARGE SCALE GENOMIC DNA]</scope>
    <source>
        <strain>C57BL/6J</strain>
    </source>
</reference>
<reference key="2">
    <citation type="journal article" date="2012" name="Free Radic. Biol. Med.">
        <title>Expression of lactoperoxidase in differentiated mouse colon epithelial cells.</title>
        <authorList>
            <person name="Kim B.W."/>
            <person name="Esworthy R.S."/>
            <person name="Hahn M.A."/>
            <person name="Pfeifer G.P."/>
            <person name="Chu F.F."/>
        </authorList>
    </citation>
    <scope>SUBCELLULAR LOCATION</scope>
    <scope>TISSUE SPECIFICITY</scope>
</reference>
<reference key="3">
    <citation type="journal article" date="2021" name="Sci. Rep.">
        <title>Deletion of the lactoperoxidase gene causes multisystem inflammation and tumors in mice.</title>
        <authorList>
            <person name="Yamakaze J."/>
            <person name="Lu Z."/>
        </authorList>
    </citation>
    <scope>FUNCTION</scope>
    <scope>CATALYTIC ACTIVITY</scope>
    <scope>DISRUPTION PHENOTYPE</scope>
    <scope>TISSUE SPECIFICITY</scope>
</reference>
<proteinExistence type="evidence at protein level"/>
<accession>Q5SW46</accession>
<protein>
    <recommendedName>
        <fullName evidence="9">Lactoperoxidase</fullName>
        <shortName evidence="9">LPO</shortName>
        <ecNumber evidence="10">1.11.1.7</ecNumber>
    </recommendedName>
</protein>
<comment type="function">
    <text evidence="3 4 8">Heme-containing oxidoreductase which catalyzes the conversion of thiocyanate (SCN(-)) into antimicrobial agent hypothiocyanous acid (OSCN(-)) in the presence of hydrogen peroxide (H2O2) (By similarity). Also involved in the conversion of iodide (I(-)) into hypoiodite (IO(-)) in the presence of H2O2 (By similarity). Responsible for the inactivation of a wide range of micro-organisms and hence, important component of defense mechanism (By similarity). May be implicated in airway host defense against infection (By similarity). May contribute to maintaining an appropriate H2O2 cellular level, therefore protecting cells from H2O2-caused injuries and inflammation (PubMed:34127712).</text>
</comment>
<comment type="catalytic activity">
    <reaction evidence="10">
        <text>2 a phenolic donor + H2O2 = 2 a phenolic radical donor + 2 H2O</text>
        <dbReference type="Rhea" id="RHEA:56136"/>
        <dbReference type="ChEBI" id="CHEBI:15377"/>
        <dbReference type="ChEBI" id="CHEBI:16240"/>
        <dbReference type="ChEBI" id="CHEBI:139520"/>
        <dbReference type="ChEBI" id="CHEBI:139521"/>
        <dbReference type="EC" id="1.11.1.7"/>
    </reaction>
    <physiologicalReaction direction="left-to-right" evidence="10">
        <dbReference type="Rhea" id="RHEA:56137"/>
    </physiologicalReaction>
</comment>
<comment type="catalytic activity">
    <reaction evidence="4">
        <text>thiocyanate + H2O2 + H(+) = hypothiocyanous acid + H2O</text>
        <dbReference type="Rhea" id="RHEA:69416"/>
        <dbReference type="ChEBI" id="CHEBI:15377"/>
        <dbReference type="ChEBI" id="CHEBI:15378"/>
        <dbReference type="ChEBI" id="CHEBI:16240"/>
        <dbReference type="ChEBI" id="CHEBI:18022"/>
        <dbReference type="ChEBI" id="CHEBI:133907"/>
    </reaction>
    <physiologicalReaction direction="left-to-right" evidence="4">
        <dbReference type="Rhea" id="RHEA:69417"/>
    </physiologicalReaction>
</comment>
<comment type="catalytic activity">
    <reaction evidence="4">
        <text>iodide + H2O2 = hypoiodite + H2O</text>
        <dbReference type="Rhea" id="RHEA:69420"/>
        <dbReference type="ChEBI" id="CHEBI:15377"/>
        <dbReference type="ChEBI" id="CHEBI:16240"/>
        <dbReference type="ChEBI" id="CHEBI:16382"/>
        <dbReference type="ChEBI" id="CHEBI:29232"/>
    </reaction>
    <physiologicalReaction direction="left-to-right" evidence="4">
        <dbReference type="Rhea" id="RHEA:69421"/>
    </physiologicalReaction>
</comment>
<comment type="cofactor">
    <cofactor evidence="6">
        <name>Ca(2+)</name>
        <dbReference type="ChEBI" id="CHEBI:29108"/>
    </cofactor>
    <text evidence="6">Binds 1 Ca(2+) ion per heterodimer.</text>
</comment>
<comment type="cofactor">
    <cofactor evidence="6">
        <name>heme b</name>
        <dbReference type="ChEBI" id="CHEBI:60344"/>
    </cofactor>
    <text evidence="6">Binds 1 heme b (iron(II)-protoporphyrin IX) group covalently per heterodimer.</text>
</comment>
<comment type="subcellular location">
    <subcellularLocation>
        <location evidence="3">Secreted</location>
    </subcellularLocation>
    <subcellularLocation>
        <location evidence="7">Cytoplasm</location>
    </subcellularLocation>
    <text evidence="7">Expressed in the cytoplasm in intestinal epithelial cells.</text>
</comment>
<comment type="tissue specificity">
    <text evidence="7 8">Expressed in the colon, including colonocytes and mucin-containing goblet cells (PubMed:22343415, PubMed:34127712). Not detected in the ileum (PubMed:22343415).</text>
</comment>
<comment type="disruption phenotype">
    <text evidence="8">Knockout mice exhibit inflammation and lesions in the cardiovascular, respiratory, digestive or excretory systems, neuropathology, and tumors, with high incidence.</text>
</comment>
<comment type="miscellaneous">
    <text evidence="4">Thiocyanate (SCN(-)) and hypothiocyanite (OSCN(-)) are bound in the distal heme cavity. The iodide ion (I(-)) occupies a position which is stabilized by the interactions with heme moiety, His-224, Arg-370 and Glu-373. Hydrogen peroxide is held between the heme iron and His-224.</text>
</comment>
<comment type="similarity">
    <text evidence="6">Belongs to the peroxidase family.</text>
</comment>
<sequence>MKVLLHLPALLASLTLLQTAASASDDPTAETDIIHDTVEEVKVWVNKAFLDSRDRLKMAMTTKIHSTRHLSDYLKHAKGRTRTAIRSGQVWEESLKKLSQFLTNVTGQGLDLTLLSWEAGCDPPAPTMTCNISSPYRTITGYCNNRKNPALGSANRALARWLPAEYEDGLSLPYGWTPGKMRNGFPLPQPREVSNQIAAYLNEEDVLDQKRSMLFMQWGQIVDHDMDFAPETEMGSDTYTKAQCDEHCIQGDNCFPIMFPPGDPKLKTQGKCMPFFRAGFVCPTPPYKSLAREQINALTSFLDASLVYSPEPSLANRLRNLSSPLGLMAVNEEVSDNGRPFPPFVKMKPSPCEVINATAGVPCFLAGDSRASEQILLATSHTLFIREHNRLATELSRLNPHWDRETLYQEARKIMGAFIQITTFRDYLPILLGDEMQKWIPPYQGYNESVDPRISNVFTFALRFGHLEIPSTVYRLDENYQPWGSESELPLHTVFFNTWRLVKDGGIDPLVRGLLAKNAKLMHQNKMMTGELRNKLFQPNHTIHGFDLASINIQRSRDHGQPGYNSWRAFCGLSQPKTLEELSAVMKNEVLAKKLMDLYGTPSNIDIWLGAVAEPLVHRGRVGPLLTCLLGQQFQRIRDGDRFWWENPGVFTEKQRESLQKMSFSRLVCDNTGIDKVPLNPFQANAYPHGFVDCSSIDKLDLSPWASVKE</sequence>